<keyword id="KW-0010">Activator</keyword>
<keyword id="KW-0238">DNA-binding</keyword>
<keyword id="KW-0678">Repressor</keyword>
<keyword id="KW-0804">Transcription</keyword>
<keyword id="KW-0805">Transcription regulation</keyword>
<keyword id="KW-0843">Virulence</keyword>
<protein>
    <recommendedName>
        <fullName>HTH-type transcriptional regulator rot</fullName>
    </recommendedName>
    <alternativeName>
        <fullName>Repressor of toxins</fullName>
    </alternativeName>
</protein>
<feature type="chain" id="PRO_0000220549" description="HTH-type transcriptional regulator rot">
    <location>
        <begin position="1"/>
        <end position="166"/>
    </location>
</feature>
<feature type="DNA-binding region" description="H-T-H motif" evidence="2">
    <location>
        <begin position="87"/>
        <end position="110"/>
    </location>
</feature>
<gene>
    <name type="primary">rot</name>
    <name type="ordered locus">MW1705</name>
</gene>
<evidence type="ECO:0000250" key="1"/>
<evidence type="ECO:0000255" key="2"/>
<evidence type="ECO:0000305" key="3"/>
<name>ROT_STAAW</name>
<reference key="1">
    <citation type="journal article" date="2002" name="Lancet">
        <title>Genome and virulence determinants of high virulence community-acquired MRSA.</title>
        <authorList>
            <person name="Baba T."/>
            <person name="Takeuchi F."/>
            <person name="Kuroda M."/>
            <person name="Yuzawa H."/>
            <person name="Aoki K."/>
            <person name="Oguchi A."/>
            <person name="Nagai Y."/>
            <person name="Iwama N."/>
            <person name="Asano K."/>
            <person name="Naimi T."/>
            <person name="Kuroda H."/>
            <person name="Cui L."/>
            <person name="Yamamoto K."/>
            <person name="Hiramatsu K."/>
        </authorList>
    </citation>
    <scope>NUCLEOTIDE SEQUENCE [LARGE SCALE GENOMIC DNA]</scope>
    <source>
        <strain>MW2</strain>
    </source>
</reference>
<organism>
    <name type="scientific">Staphylococcus aureus (strain MW2)</name>
    <dbReference type="NCBI Taxonomy" id="196620"/>
    <lineage>
        <taxon>Bacteria</taxon>
        <taxon>Bacillati</taxon>
        <taxon>Bacillota</taxon>
        <taxon>Bacilli</taxon>
        <taxon>Bacillales</taxon>
        <taxon>Staphylococcaceae</taxon>
        <taxon>Staphylococcus</taxon>
    </lineage>
</organism>
<accession>Q7A0L8</accession>
<comment type="function">
    <text evidence="1">Global regulator with both positive and negative effects that mediates modulation of several genes involved in virulence. Also, modulates the expression of genes not previously implicated in pathogenesis (By similarity).</text>
</comment>
<comment type="similarity">
    <text evidence="3">Belongs to the rot family.</text>
</comment>
<comment type="sequence caution" evidence="3">
    <conflict type="erroneous initiation">
        <sequence resource="EMBL-CDS" id="BAB95570"/>
    </conflict>
</comment>
<sequence length="166" mass="19389">MHKLAHTSFGIVGMFVNTCMVAKYVIINWEMFSMKKVNNDTVFGILQLETLLGDINSIFSEIESEYKMSREEILILLTLWQKGSMTLKEMDRFVEVKPYKRTRTYNNLVELEWIYKERPVDDERTVIIHFNEKLQQEKVELLNFISDAIASRATAMQNSLNAIIAV</sequence>
<proteinExistence type="inferred from homology"/>
<dbReference type="EMBL" id="BA000033">
    <property type="protein sequence ID" value="BAB95570.1"/>
    <property type="status" value="ALT_INIT"/>
    <property type="molecule type" value="Genomic_DNA"/>
</dbReference>
<dbReference type="SMR" id="Q7A0L8"/>
<dbReference type="KEGG" id="sam:MW1705"/>
<dbReference type="HOGENOM" id="CLU_132118_0_0_9"/>
<dbReference type="GO" id="GO:0003677">
    <property type="term" value="F:DNA binding"/>
    <property type="evidence" value="ECO:0007669"/>
    <property type="project" value="UniProtKB-KW"/>
</dbReference>
<dbReference type="GO" id="GO:0003700">
    <property type="term" value="F:DNA-binding transcription factor activity"/>
    <property type="evidence" value="ECO:0007669"/>
    <property type="project" value="InterPro"/>
</dbReference>
<dbReference type="GO" id="GO:0006950">
    <property type="term" value="P:response to stress"/>
    <property type="evidence" value="ECO:0007669"/>
    <property type="project" value="TreeGrafter"/>
</dbReference>
<dbReference type="FunFam" id="1.10.10.10:FF:000715">
    <property type="entry name" value="HTH-type transcriptional regulator rot"/>
    <property type="match status" value="1"/>
</dbReference>
<dbReference type="Gene3D" id="1.10.10.10">
    <property type="entry name" value="Winged helix-like DNA-binding domain superfamily/Winged helix DNA-binding domain"/>
    <property type="match status" value="1"/>
</dbReference>
<dbReference type="InterPro" id="IPR000835">
    <property type="entry name" value="HTH_MarR-typ"/>
</dbReference>
<dbReference type="InterPro" id="IPR039422">
    <property type="entry name" value="MarR/SlyA-like"/>
</dbReference>
<dbReference type="InterPro" id="IPR016998">
    <property type="entry name" value="Rot"/>
</dbReference>
<dbReference type="InterPro" id="IPR010166">
    <property type="entry name" value="SarA/Rot_dom"/>
</dbReference>
<dbReference type="InterPro" id="IPR055166">
    <property type="entry name" value="Transc_reg_Sar_Rot_HTH"/>
</dbReference>
<dbReference type="InterPro" id="IPR036388">
    <property type="entry name" value="WH-like_DNA-bd_sf"/>
</dbReference>
<dbReference type="InterPro" id="IPR036390">
    <property type="entry name" value="WH_DNA-bd_sf"/>
</dbReference>
<dbReference type="NCBIfam" id="TIGR01889">
    <property type="entry name" value="Staph_reg_Sar"/>
    <property type="match status" value="1"/>
</dbReference>
<dbReference type="PANTHER" id="PTHR33164:SF56">
    <property type="entry name" value="HTH-TYPE TRANSCRIPTIONAL REGULATOR MHQR"/>
    <property type="match status" value="1"/>
</dbReference>
<dbReference type="PANTHER" id="PTHR33164">
    <property type="entry name" value="TRANSCRIPTIONAL REGULATOR, MARR FAMILY"/>
    <property type="match status" value="1"/>
</dbReference>
<dbReference type="Pfam" id="PF22381">
    <property type="entry name" value="Staph_reg_Sar_Rot"/>
    <property type="match status" value="1"/>
</dbReference>
<dbReference type="PIRSF" id="PIRSF032474">
    <property type="entry name" value="TF_HTH_Rot"/>
    <property type="match status" value="1"/>
</dbReference>
<dbReference type="SMART" id="SM00347">
    <property type="entry name" value="HTH_MARR"/>
    <property type="match status" value="1"/>
</dbReference>
<dbReference type="SUPFAM" id="SSF46785">
    <property type="entry name" value="Winged helix' DNA-binding domain"/>
    <property type="match status" value="1"/>
</dbReference>